<dbReference type="EC" id="4.2.1.49" evidence="1"/>
<dbReference type="EMBL" id="AM420293">
    <property type="protein sequence ID" value="CAM05576.1"/>
    <property type="molecule type" value="Genomic_DNA"/>
</dbReference>
<dbReference type="RefSeq" id="WP_009945953.1">
    <property type="nucleotide sequence ID" value="NC_009142.1"/>
</dbReference>
<dbReference type="SMR" id="A4FNF1"/>
<dbReference type="STRING" id="405948.SACE_6406"/>
<dbReference type="KEGG" id="sen:SACE_6406"/>
<dbReference type="eggNOG" id="COG2987">
    <property type="taxonomic scope" value="Bacteria"/>
</dbReference>
<dbReference type="HOGENOM" id="CLU_018868_0_1_11"/>
<dbReference type="OrthoDB" id="9764874at2"/>
<dbReference type="UniPathway" id="UPA00379">
    <property type="reaction ID" value="UER00550"/>
</dbReference>
<dbReference type="Proteomes" id="UP000006728">
    <property type="component" value="Chromosome"/>
</dbReference>
<dbReference type="GO" id="GO:0005737">
    <property type="term" value="C:cytoplasm"/>
    <property type="evidence" value="ECO:0007669"/>
    <property type="project" value="UniProtKB-SubCell"/>
</dbReference>
<dbReference type="GO" id="GO:0016153">
    <property type="term" value="F:urocanate hydratase activity"/>
    <property type="evidence" value="ECO:0007669"/>
    <property type="project" value="UniProtKB-UniRule"/>
</dbReference>
<dbReference type="GO" id="GO:0019556">
    <property type="term" value="P:L-histidine catabolic process to glutamate and formamide"/>
    <property type="evidence" value="ECO:0007669"/>
    <property type="project" value="UniProtKB-UniPathway"/>
</dbReference>
<dbReference type="GO" id="GO:0019557">
    <property type="term" value="P:L-histidine catabolic process to glutamate and formate"/>
    <property type="evidence" value="ECO:0007669"/>
    <property type="project" value="UniProtKB-UniPathway"/>
</dbReference>
<dbReference type="FunFam" id="3.40.50.10730:FF:000001">
    <property type="entry name" value="Urocanate hydratase"/>
    <property type="match status" value="1"/>
</dbReference>
<dbReference type="Gene3D" id="3.40.50.10730">
    <property type="entry name" value="Urocanase like domains"/>
    <property type="match status" value="1"/>
</dbReference>
<dbReference type="Gene3D" id="3.40.1770.10">
    <property type="entry name" value="Urocanase superfamily"/>
    <property type="match status" value="1"/>
</dbReference>
<dbReference type="HAMAP" id="MF_00577">
    <property type="entry name" value="HutU"/>
    <property type="match status" value="1"/>
</dbReference>
<dbReference type="InterPro" id="IPR055351">
    <property type="entry name" value="Urocanase"/>
</dbReference>
<dbReference type="InterPro" id="IPR023637">
    <property type="entry name" value="Urocanase-like"/>
</dbReference>
<dbReference type="InterPro" id="IPR035401">
    <property type="entry name" value="Urocanase_C"/>
</dbReference>
<dbReference type="InterPro" id="IPR038364">
    <property type="entry name" value="Urocanase_central_sf"/>
</dbReference>
<dbReference type="InterPro" id="IPR023636">
    <property type="entry name" value="Urocanase_CS"/>
</dbReference>
<dbReference type="InterPro" id="IPR035400">
    <property type="entry name" value="Urocanase_N"/>
</dbReference>
<dbReference type="InterPro" id="IPR035085">
    <property type="entry name" value="Urocanase_Rossmann-like"/>
</dbReference>
<dbReference type="InterPro" id="IPR036190">
    <property type="entry name" value="Urocanase_sf"/>
</dbReference>
<dbReference type="NCBIfam" id="TIGR01228">
    <property type="entry name" value="hutU"/>
    <property type="match status" value="1"/>
</dbReference>
<dbReference type="NCBIfam" id="NF003820">
    <property type="entry name" value="PRK05414.1"/>
    <property type="match status" value="1"/>
</dbReference>
<dbReference type="PANTHER" id="PTHR12216">
    <property type="entry name" value="UROCANATE HYDRATASE"/>
    <property type="match status" value="1"/>
</dbReference>
<dbReference type="PANTHER" id="PTHR12216:SF4">
    <property type="entry name" value="UROCANATE HYDRATASE"/>
    <property type="match status" value="1"/>
</dbReference>
<dbReference type="Pfam" id="PF01175">
    <property type="entry name" value="Urocanase"/>
    <property type="match status" value="1"/>
</dbReference>
<dbReference type="Pfam" id="PF17392">
    <property type="entry name" value="Urocanase_C"/>
    <property type="match status" value="1"/>
</dbReference>
<dbReference type="Pfam" id="PF17391">
    <property type="entry name" value="Urocanase_N"/>
    <property type="match status" value="1"/>
</dbReference>
<dbReference type="PIRSF" id="PIRSF001423">
    <property type="entry name" value="Urocanate_hydrat"/>
    <property type="match status" value="1"/>
</dbReference>
<dbReference type="SUPFAM" id="SSF111326">
    <property type="entry name" value="Urocanase"/>
    <property type="match status" value="1"/>
</dbReference>
<dbReference type="PROSITE" id="PS01233">
    <property type="entry name" value="UROCANASE"/>
    <property type="match status" value="1"/>
</dbReference>
<proteinExistence type="inferred from homology"/>
<organism>
    <name type="scientific">Saccharopolyspora erythraea (strain ATCC 11635 / DSM 40517 / JCM 4748 / NBRC 13426 / NCIMB 8594 / NRRL 2338)</name>
    <dbReference type="NCBI Taxonomy" id="405948"/>
    <lineage>
        <taxon>Bacteria</taxon>
        <taxon>Bacillati</taxon>
        <taxon>Actinomycetota</taxon>
        <taxon>Actinomycetes</taxon>
        <taxon>Pseudonocardiales</taxon>
        <taxon>Pseudonocardiaceae</taxon>
        <taxon>Saccharopolyspora</taxon>
    </lineage>
</organism>
<feature type="chain" id="PRO_1000025146" description="Urocanate hydratase">
    <location>
        <begin position="1"/>
        <end position="550"/>
    </location>
</feature>
<feature type="active site" evidence="1">
    <location>
        <position position="405"/>
    </location>
</feature>
<feature type="binding site" evidence="1">
    <location>
        <begin position="48"/>
        <end position="49"/>
    </location>
    <ligand>
        <name>NAD(+)</name>
        <dbReference type="ChEBI" id="CHEBI:57540"/>
    </ligand>
</feature>
<feature type="binding site" evidence="1">
    <location>
        <position position="126"/>
    </location>
    <ligand>
        <name>NAD(+)</name>
        <dbReference type="ChEBI" id="CHEBI:57540"/>
    </ligand>
</feature>
<feature type="binding site" evidence="1">
    <location>
        <begin position="172"/>
        <end position="174"/>
    </location>
    <ligand>
        <name>NAD(+)</name>
        <dbReference type="ChEBI" id="CHEBI:57540"/>
    </ligand>
</feature>
<feature type="binding site" evidence="1">
    <location>
        <position position="192"/>
    </location>
    <ligand>
        <name>NAD(+)</name>
        <dbReference type="ChEBI" id="CHEBI:57540"/>
    </ligand>
</feature>
<feature type="binding site" evidence="1">
    <location>
        <position position="197"/>
    </location>
    <ligand>
        <name>NAD(+)</name>
        <dbReference type="ChEBI" id="CHEBI:57540"/>
    </ligand>
</feature>
<feature type="binding site" evidence="1">
    <location>
        <begin position="238"/>
        <end position="239"/>
    </location>
    <ligand>
        <name>NAD(+)</name>
        <dbReference type="ChEBI" id="CHEBI:57540"/>
    </ligand>
</feature>
<feature type="binding site" evidence="1">
    <location>
        <begin position="259"/>
        <end position="263"/>
    </location>
    <ligand>
        <name>NAD(+)</name>
        <dbReference type="ChEBI" id="CHEBI:57540"/>
    </ligand>
</feature>
<feature type="binding site" evidence="1">
    <location>
        <begin position="268"/>
        <end position="269"/>
    </location>
    <ligand>
        <name>NAD(+)</name>
        <dbReference type="ChEBI" id="CHEBI:57540"/>
    </ligand>
</feature>
<feature type="binding site" evidence="1">
    <location>
        <position position="317"/>
    </location>
    <ligand>
        <name>NAD(+)</name>
        <dbReference type="ChEBI" id="CHEBI:57540"/>
    </ligand>
</feature>
<feature type="binding site" evidence="1">
    <location>
        <position position="487"/>
    </location>
    <ligand>
        <name>NAD(+)</name>
        <dbReference type="ChEBI" id="CHEBI:57540"/>
    </ligand>
</feature>
<comment type="function">
    <text evidence="1">Catalyzes the conversion of urocanate to 4-imidazolone-5-propionate.</text>
</comment>
<comment type="catalytic activity">
    <reaction evidence="1">
        <text>4-imidazolone-5-propanoate = trans-urocanate + H2O</text>
        <dbReference type="Rhea" id="RHEA:13101"/>
        <dbReference type="ChEBI" id="CHEBI:15377"/>
        <dbReference type="ChEBI" id="CHEBI:17771"/>
        <dbReference type="ChEBI" id="CHEBI:77893"/>
        <dbReference type="EC" id="4.2.1.49"/>
    </reaction>
</comment>
<comment type="cofactor">
    <cofactor evidence="1">
        <name>NAD(+)</name>
        <dbReference type="ChEBI" id="CHEBI:57540"/>
    </cofactor>
    <text evidence="1">Binds 1 NAD(+) per subunit.</text>
</comment>
<comment type="pathway">
    <text evidence="1">Amino-acid degradation; L-histidine degradation into L-glutamate; N-formimidoyl-L-glutamate from L-histidine: step 2/3.</text>
</comment>
<comment type="subcellular location">
    <subcellularLocation>
        <location evidence="1">Cytoplasm</location>
    </subcellularLocation>
</comment>
<comment type="similarity">
    <text evidence="1">Belongs to the urocanase family.</text>
</comment>
<gene>
    <name evidence="1" type="primary">hutU</name>
    <name type="ordered locus">SACE_6406</name>
</gene>
<evidence type="ECO:0000255" key="1">
    <source>
        <dbReference type="HAMAP-Rule" id="MF_00577"/>
    </source>
</evidence>
<protein>
    <recommendedName>
        <fullName evidence="1">Urocanate hydratase</fullName>
        <shortName evidence="1">Urocanase</shortName>
        <ecNumber evidence="1">4.2.1.49</ecNumber>
    </recommendedName>
    <alternativeName>
        <fullName evidence="1">Imidazolonepropionate hydrolase</fullName>
    </alternativeName>
</protein>
<name>HUTU_SACEN</name>
<sequence length="550" mass="59242">MSSARPVRAARGTTLTARSWSTEAPLRMLQNNLDPEVAERPDDLVVYGGTGKAARNWASFDAIVRELTTLSDDETLLVQSGKPVGVLRTHEWAPRVLLANSNLVGDWANWPEFRRLDALGLMMYGQMTAGSWIYIGTQGILQGTYETFAAVAERRFGGTLAGTLTITAGLGGMGGAQPLAVTMNEGVALVVECDPERAHRRVKHGYLDEVADGLDQAIEKAEAAKAQRRAYSVAVIGNAAEVLPELLRRGVRADIVTDQTSAHDPLSYLPLGVELEDWEDYASKKPEEFTDRARDSMAKHVEAMVGFMDAGAEVFDYGNSLRGEAQLAGYGRAFDYPGFVPAYIRPLFCEGKGPFRWAALSGDPADIAATDRAILDLFGDDDHLARWIRLAGEKVSFQGLPARICWLGYGERHLAGLRFNEMVASGELKAPLVLGRDHLDCGSVASPYRETEGMADGSDAIADWPLLNALVNTASGATWVSLHHGGGVGMGRSLHAGQVTVADGTALAAQKLERVLTNDPGMGVIRHVDAGYDRAREVATERGVRVPGLA</sequence>
<keyword id="KW-0963">Cytoplasm</keyword>
<keyword id="KW-0369">Histidine metabolism</keyword>
<keyword id="KW-0456">Lyase</keyword>
<keyword id="KW-0520">NAD</keyword>
<keyword id="KW-1185">Reference proteome</keyword>
<reference key="1">
    <citation type="journal article" date="2007" name="Nat. Biotechnol.">
        <title>Complete genome sequence of the erythromycin-producing bacterium Saccharopolyspora erythraea NRRL23338.</title>
        <authorList>
            <person name="Oliynyk M."/>
            <person name="Samborskyy M."/>
            <person name="Lester J.B."/>
            <person name="Mironenko T."/>
            <person name="Scott N."/>
            <person name="Dickens S."/>
            <person name="Haydock S.F."/>
            <person name="Leadlay P.F."/>
        </authorList>
    </citation>
    <scope>NUCLEOTIDE SEQUENCE [LARGE SCALE GENOMIC DNA]</scope>
    <source>
        <strain>ATCC 11635 / DSM 40517 / JCM 4748 / NBRC 13426 / NCIMB 8594 / NRRL 2338</strain>
    </source>
</reference>
<accession>A4FNF1</accession>